<keyword id="KW-0175">Coiled coil</keyword>
<keyword id="KW-0963">Cytoplasm</keyword>
<keyword id="KW-0206">Cytoskeleton</keyword>
<keyword id="KW-0597">Phosphoprotein</keyword>
<keyword id="KW-1185">Reference proteome</keyword>
<dbReference type="EMBL" id="BC083639">
    <property type="protein sequence ID" value="AAH83639.1"/>
    <property type="molecule type" value="mRNA"/>
</dbReference>
<dbReference type="RefSeq" id="NP_001014043.1">
    <property type="nucleotide sequence ID" value="NM_001014021.1"/>
</dbReference>
<dbReference type="SMR" id="Q5XIN9"/>
<dbReference type="FunCoup" id="Q5XIN9">
    <property type="interactions" value="75"/>
</dbReference>
<dbReference type="iPTMnet" id="Q5XIN9"/>
<dbReference type="PhosphoSitePlus" id="Q5XIN9"/>
<dbReference type="Ensembl" id="ENSRNOT00000102115.1">
    <property type="protein sequence ID" value="ENSRNOP00000080187.1"/>
    <property type="gene ID" value="ENSRNOG00000033733.6"/>
</dbReference>
<dbReference type="GeneID" id="308810"/>
<dbReference type="KEGG" id="rno:308810"/>
<dbReference type="UCSC" id="RGD:1306766">
    <property type="organism name" value="rat"/>
</dbReference>
<dbReference type="AGR" id="RGD:1306766"/>
<dbReference type="CTD" id="60494"/>
<dbReference type="RGD" id="1306766">
    <property type="gene designation" value="Ccdc81"/>
</dbReference>
<dbReference type="GeneTree" id="ENSGT00390000011985"/>
<dbReference type="InParanoid" id="Q5XIN9"/>
<dbReference type="OMA" id="QCEKYPR"/>
<dbReference type="OrthoDB" id="38351at9989"/>
<dbReference type="PhylomeDB" id="Q5XIN9"/>
<dbReference type="PRO" id="PR:Q5XIN9"/>
<dbReference type="Proteomes" id="UP000002494">
    <property type="component" value="Chromosome 1"/>
</dbReference>
<dbReference type="GO" id="GO:0005813">
    <property type="term" value="C:centrosome"/>
    <property type="evidence" value="ECO:0000250"/>
    <property type="project" value="UniProtKB"/>
</dbReference>
<dbReference type="GO" id="GO:0036064">
    <property type="term" value="C:ciliary basal body"/>
    <property type="evidence" value="ECO:0007669"/>
    <property type="project" value="Ensembl"/>
</dbReference>
<dbReference type="GO" id="GO:0005737">
    <property type="term" value="C:cytoplasm"/>
    <property type="evidence" value="ECO:0007669"/>
    <property type="project" value="UniProtKB-KW"/>
</dbReference>
<dbReference type="GO" id="GO:0005815">
    <property type="term" value="C:microtubule organizing center"/>
    <property type="evidence" value="ECO:0000318"/>
    <property type="project" value="GO_Central"/>
</dbReference>
<dbReference type="GO" id="GO:0005886">
    <property type="term" value="C:plasma membrane"/>
    <property type="evidence" value="ECO:0007669"/>
    <property type="project" value="Ensembl"/>
</dbReference>
<dbReference type="GO" id="GO:0003677">
    <property type="term" value="F:DNA binding"/>
    <property type="evidence" value="ECO:0007669"/>
    <property type="project" value="InterPro"/>
</dbReference>
<dbReference type="InterPro" id="IPR040673">
    <property type="entry name" value="CCDC81_HU_dom_2"/>
</dbReference>
<dbReference type="InterPro" id="IPR026295">
    <property type="entry name" value="Coiled-coil_dom_cont_p_81"/>
</dbReference>
<dbReference type="InterPro" id="IPR028034">
    <property type="entry name" value="HU-CCDC81"/>
</dbReference>
<dbReference type="InterPro" id="IPR010992">
    <property type="entry name" value="IHF-like_DNA-bd_dom_sf"/>
</dbReference>
<dbReference type="PANTHER" id="PTHR14362">
    <property type="entry name" value="COILED-COIL DOMAIN-CONTAINING PROTEIN 81"/>
    <property type="match status" value="1"/>
</dbReference>
<dbReference type="PANTHER" id="PTHR14362:SF2">
    <property type="entry name" value="COILED-COIL DOMAIN-CONTAINING PROTEIN 81"/>
    <property type="match status" value="1"/>
</dbReference>
<dbReference type="Pfam" id="PF14908">
    <property type="entry name" value="HU-CCDC81_euk_1"/>
    <property type="match status" value="1"/>
</dbReference>
<dbReference type="Pfam" id="PF18289">
    <property type="entry name" value="HU-CCDC81_euk_2"/>
    <property type="match status" value="1"/>
</dbReference>
<dbReference type="SUPFAM" id="SSF47729">
    <property type="entry name" value="IHF-like DNA-binding proteins"/>
    <property type="match status" value="1"/>
</dbReference>
<proteinExistence type="evidence at protein level"/>
<name>CCD81_RAT</name>
<comment type="subcellular location">
    <subcellularLocation>
        <location evidence="1">Cytoplasm</location>
        <location evidence="1">Cytoskeleton</location>
        <location evidence="1">Microtubule organizing center</location>
        <location evidence="1">Centrosome</location>
    </subcellularLocation>
</comment>
<gene>
    <name type="primary">Ccdc81</name>
</gene>
<accession>Q5XIN9</accession>
<sequence length="651" mass="75314">MLDRIGPGFQDLCRQVLPTLPSLSQEEVSTIWGNVSDFVERQLTMHKGVQISGLGTFTFTRQQLEMGNKKFVLVQRPVFIMSEKLVQTHGLKQNKVFSPGDIPVVPLNFVMISLEGPFNRDTIEGCVRETLLFLSRSISIKQNVEFTFKGIGVLSIRDNKVKMRFYKDFLSSVDGSGTLTKALANRPGTMDSVLSSRESFGKRPNSALAFPRIEHKETENKPPVEVFGEEGGENRPRKSKLKDQSDKEEGAWEISSAKKHRDRQSISPAKVTSGSLLDKFERSGNGGKITENLSPGGQRNDNEKPKTSPAPACQDHNKAGQEMCYVCLQRAQRNFALYYGDEKRRREIEDERLMQQYQIAKDQEAFFKSQMKSMATREQNQKNAAYNLGVAEAIRSHKNEKPDFYKSFLFDKRPLSPEINAFKQEEYSQSLLKQMESKREKEIKQRQNRELMDRLEQVQLTEELAAQRAQYLKEKMEETQYYKRALDAQVKNKPSQLPMFEPDSAEPIFGKNEGEMEMEKRKREQSCMKHQMEAAANLKRNTILNQLVDQRRDLQMLQRTKREHLADRAAEVDRVNRLNQCLQEDWDRSLAMKKQRDLEEKAFERASDKLFLLDQCEKYRRCRQCQRRTSNTGESNVWPLNKFLQGSRLLV</sequence>
<reference key="1">
    <citation type="journal article" date="2004" name="Genome Res.">
        <title>The status, quality, and expansion of the NIH full-length cDNA project: the Mammalian Gene Collection (MGC).</title>
        <authorList>
            <consortium name="The MGC Project Team"/>
        </authorList>
    </citation>
    <scope>NUCLEOTIDE SEQUENCE [LARGE SCALE MRNA]</scope>
    <source>
        <tissue>Testis</tissue>
    </source>
</reference>
<reference key="2">
    <citation type="journal article" date="2012" name="Nat. Commun.">
        <title>Quantitative maps of protein phosphorylation sites across 14 different rat organs and tissues.</title>
        <authorList>
            <person name="Lundby A."/>
            <person name="Secher A."/>
            <person name="Lage K."/>
            <person name="Nordsborg N.B."/>
            <person name="Dmytriyev A."/>
            <person name="Lundby C."/>
            <person name="Olsen J.V."/>
        </authorList>
    </citation>
    <scope>PHOSPHORYLATION [LARGE SCALE ANALYSIS] AT SER-206; SER-273; SER-275; SER-294 AND SER-416</scope>
    <scope>IDENTIFICATION BY MASS SPECTROMETRY [LARGE SCALE ANALYSIS]</scope>
</reference>
<protein>
    <recommendedName>
        <fullName>Coiled-coil domain-containing protein 81</fullName>
    </recommendedName>
</protein>
<feature type="chain" id="PRO_0000288879" description="Coiled-coil domain-containing protein 81">
    <location>
        <begin position="1"/>
        <end position="651"/>
    </location>
</feature>
<feature type="region of interest" description="Disordered" evidence="3">
    <location>
        <begin position="194"/>
        <end position="314"/>
    </location>
</feature>
<feature type="coiled-coil region" evidence="2">
    <location>
        <begin position="428"/>
        <end position="465"/>
    </location>
</feature>
<feature type="coiled-coil region" evidence="2">
    <location>
        <begin position="539"/>
        <end position="566"/>
    </location>
</feature>
<feature type="compositionally biased region" description="Basic and acidic residues" evidence="3">
    <location>
        <begin position="212"/>
        <end position="222"/>
    </location>
</feature>
<feature type="compositionally biased region" description="Basic and acidic residues" evidence="3">
    <location>
        <begin position="232"/>
        <end position="250"/>
    </location>
</feature>
<feature type="compositionally biased region" description="Polar residues" evidence="3">
    <location>
        <begin position="265"/>
        <end position="275"/>
    </location>
</feature>
<feature type="modified residue" description="Phosphoserine" evidence="4">
    <location>
        <position position="206"/>
    </location>
</feature>
<feature type="modified residue" description="Phosphoserine" evidence="4">
    <location>
        <position position="273"/>
    </location>
</feature>
<feature type="modified residue" description="Phosphoserine" evidence="4">
    <location>
        <position position="275"/>
    </location>
</feature>
<feature type="modified residue" description="Phosphoserine" evidence="4">
    <location>
        <position position="294"/>
    </location>
</feature>
<feature type="modified residue" description="Phosphoserine" evidence="4">
    <location>
        <position position="416"/>
    </location>
</feature>
<evidence type="ECO:0000250" key="1">
    <source>
        <dbReference type="UniProtKB" id="Q6ZN84"/>
    </source>
</evidence>
<evidence type="ECO:0000255" key="2"/>
<evidence type="ECO:0000256" key="3">
    <source>
        <dbReference type="SAM" id="MobiDB-lite"/>
    </source>
</evidence>
<evidence type="ECO:0007744" key="4">
    <source>
    </source>
</evidence>
<organism>
    <name type="scientific">Rattus norvegicus</name>
    <name type="common">Rat</name>
    <dbReference type="NCBI Taxonomy" id="10116"/>
    <lineage>
        <taxon>Eukaryota</taxon>
        <taxon>Metazoa</taxon>
        <taxon>Chordata</taxon>
        <taxon>Craniata</taxon>
        <taxon>Vertebrata</taxon>
        <taxon>Euteleostomi</taxon>
        <taxon>Mammalia</taxon>
        <taxon>Eutheria</taxon>
        <taxon>Euarchontoglires</taxon>
        <taxon>Glires</taxon>
        <taxon>Rodentia</taxon>
        <taxon>Myomorpha</taxon>
        <taxon>Muroidea</taxon>
        <taxon>Muridae</taxon>
        <taxon>Murinae</taxon>
        <taxon>Rattus</taxon>
    </lineage>
</organism>